<accession>Q9UHL9</accession>
<accession>O95444</accession>
<accession>Q6DSU6</accession>
<accession>Q75MX7</accession>
<accession>Q86UM3</accession>
<accession>Q8WVC4</accession>
<accession>Q9UHK8</accession>
<accession>Q9UI91</accession>
<evidence type="ECO:0000250" key="1"/>
<evidence type="ECO:0000255" key="2"/>
<evidence type="ECO:0000255" key="3">
    <source>
        <dbReference type="PROSITE-ProRule" id="PRU00484"/>
    </source>
</evidence>
<evidence type="ECO:0000256" key="4">
    <source>
        <dbReference type="SAM" id="MobiDB-lite"/>
    </source>
</evidence>
<evidence type="ECO:0000269" key="5">
    <source>
    </source>
</evidence>
<evidence type="ECO:0000269" key="6">
    <source>
    </source>
</evidence>
<evidence type="ECO:0000269" key="7">
    <source>
    </source>
</evidence>
<evidence type="ECO:0000269" key="8">
    <source>
    </source>
</evidence>
<evidence type="ECO:0000303" key="9">
    <source>
    </source>
</evidence>
<evidence type="ECO:0000303" key="10">
    <source>
    </source>
</evidence>
<evidence type="ECO:0000303" key="11">
    <source>
    </source>
</evidence>
<evidence type="ECO:0000303" key="12">
    <source ref="6"/>
</evidence>
<evidence type="ECO:0000305" key="13"/>
<evidence type="ECO:0007744" key="14">
    <source>
    </source>
</evidence>
<evidence type="ECO:0007744" key="15">
    <source>
    </source>
</evidence>
<evidence type="ECO:0007744" key="16">
    <source>
    </source>
</evidence>
<evidence type="ECO:0007744" key="17">
    <source>
    </source>
</evidence>
<evidence type="ECO:0007744" key="18">
    <source>
    </source>
</evidence>
<evidence type="ECO:0007744" key="19">
    <source>
    </source>
</evidence>
<evidence type="ECO:0007744" key="20">
    <source>
    </source>
</evidence>
<evidence type="ECO:0007744" key="21">
    <source>
    </source>
</evidence>
<evidence type="ECO:0007744" key="22">
    <source>
    </source>
</evidence>
<evidence type="ECO:0007744" key="23">
    <source>
    </source>
</evidence>
<evidence type="ECO:0007829" key="24">
    <source>
        <dbReference type="PDB" id="2D99"/>
    </source>
</evidence>
<evidence type="ECO:0007829" key="25">
    <source>
        <dbReference type="PDB" id="2DN5"/>
    </source>
</evidence>
<evidence type="ECO:0007829" key="26">
    <source>
        <dbReference type="PDB" id="2DZQ"/>
    </source>
</evidence>
<evidence type="ECO:0007829" key="27">
    <source>
        <dbReference type="PDB" id="2DZR"/>
    </source>
</evidence>
<reference key="1">
    <citation type="journal article" date="1998" name="Mol. Cell. Biol.">
        <title>Identification of a novel slow-muscle-fiber enhancer binding protein, MUSTRD1.</title>
        <authorList>
            <person name="O'Mahoney J.V."/>
            <person name="Guven K.L."/>
            <person name="Lin J."/>
            <person name="Joya J.E."/>
            <person name="Robinson C.S."/>
            <person name="Wade R.P."/>
            <person name="Hardeman E.C."/>
        </authorList>
    </citation>
    <scope>NUCLEOTIDE SEQUENCE [MRNA] (ISOFORM 2)</scope>
    <source>
        <tissue>Muscle</tissue>
    </source>
</reference>
<reference key="2">
    <citation type="journal article" date="1999" name="Genomics">
        <title>Identification of a putative transcription factor gene (WBSCR11) that is commonly deleted in Williams-Beuren syndrome.</title>
        <authorList>
            <person name="Osborne L.R."/>
            <person name="Campbell T."/>
            <person name="Daradich A."/>
            <person name="Scherer S.W."/>
            <person name="Tsui L.-C."/>
        </authorList>
    </citation>
    <scope>NUCLEOTIDE SEQUENCE [MRNA] (ISOFORM 2)</scope>
    <source>
        <tissue>Colon carcinoma</tissue>
    </source>
</reference>
<reference key="3">
    <citation type="journal article" date="1999" name="Eur. J. Hum. Genet.">
        <title>A transcription factor involved in skeletal muscle gene expression is deleted in patients with Williams syndrome.</title>
        <authorList>
            <person name="Tassabehji M."/>
            <person name="Carette M."/>
            <person name="Wilmot C."/>
            <person name="Donnai D."/>
            <person name="Read A.P."/>
            <person name="Metcalfe K."/>
        </authorList>
    </citation>
    <scope>NUCLEOTIDE SEQUENCE [MRNA] (ISOFORM 1)</scope>
    <source>
        <tissue>Fetal brain</tissue>
    </source>
</reference>
<reference key="4">
    <citation type="journal article" date="1999" name="Cytogenet. Cell Genet.">
        <title>Identification of GTF2IRD1, a putative transcription factor within the Williams-Beuren syndrome deletion at 7q11.23.</title>
        <authorList>
            <person name="Franke Y."/>
            <person name="Peoples R.J."/>
            <person name="Francke U."/>
        </authorList>
    </citation>
    <scope>NUCLEOTIDE SEQUENCE [MRNA] (ISOFORM 2)</scope>
    <scope>VARIANT VAL-652</scope>
</reference>
<reference key="5">
    <citation type="journal article" date="2000" name="Biochem. J.">
        <title>Characterization and gene structure of a novel retinoblastoma-protein-associated protein similar to the transcription regulator TFII-I.</title>
        <authorList>
            <person name="Yan X."/>
            <person name="Zhao X."/>
            <person name="Qian M."/>
            <person name="Guo N."/>
            <person name="Gong X."/>
            <person name="Zhu X."/>
        </authorList>
    </citation>
    <scope>NUCLEOTIDE SEQUENCE [MRNA] (ISOFORM 1)</scope>
    <scope>INTERACTION WITH RB1</scope>
    <scope>MUTAGENESIS</scope>
    <scope>VARIANT VAL-652</scope>
    <source>
        <tissue>Cervix carcinoma</tissue>
        <tissue>Fetal spleen</tissue>
        <tissue>Placenta</tissue>
    </source>
</reference>
<reference key="6">
    <citation type="submission" date="2004-06" db="EMBL/GenBank/DDBJ databases">
        <title>GTF2IRD1 represses transcription from a conserved DNA element upstream of three separate promoters.</title>
        <authorList>
            <person name="Cunliffe P."/>
            <person name="Hart-Holden N."/>
            <person name="Hinsley T."/>
            <person name="Sharrocks A.D."/>
            <person name="Tassabehji M."/>
        </authorList>
    </citation>
    <scope>NUCLEOTIDE SEQUENCE [MRNA] (ISOFORM 3)</scope>
</reference>
<reference key="7">
    <citation type="journal article" date="2003" name="Nature">
        <title>The DNA sequence of human chromosome 7.</title>
        <authorList>
            <person name="Hillier L.W."/>
            <person name="Fulton R.S."/>
            <person name="Fulton L.A."/>
            <person name="Graves T.A."/>
            <person name="Pepin K.H."/>
            <person name="Wagner-McPherson C."/>
            <person name="Layman D."/>
            <person name="Maas J."/>
            <person name="Jaeger S."/>
            <person name="Walker R."/>
            <person name="Wylie K."/>
            <person name="Sekhon M."/>
            <person name="Becker M.C."/>
            <person name="O'Laughlin M.D."/>
            <person name="Schaller M.E."/>
            <person name="Fewell G.A."/>
            <person name="Delehaunty K.D."/>
            <person name="Miner T.L."/>
            <person name="Nash W.E."/>
            <person name="Cordes M."/>
            <person name="Du H."/>
            <person name="Sun H."/>
            <person name="Edwards J."/>
            <person name="Bradshaw-Cordum H."/>
            <person name="Ali J."/>
            <person name="Andrews S."/>
            <person name="Isak A."/>
            <person name="Vanbrunt A."/>
            <person name="Nguyen C."/>
            <person name="Du F."/>
            <person name="Lamar B."/>
            <person name="Courtney L."/>
            <person name="Kalicki J."/>
            <person name="Ozersky P."/>
            <person name="Bielicki L."/>
            <person name="Scott K."/>
            <person name="Holmes A."/>
            <person name="Harkins R."/>
            <person name="Harris A."/>
            <person name="Strong C.M."/>
            <person name="Hou S."/>
            <person name="Tomlinson C."/>
            <person name="Dauphin-Kohlberg S."/>
            <person name="Kozlowicz-Reilly A."/>
            <person name="Leonard S."/>
            <person name="Rohlfing T."/>
            <person name="Rock S.M."/>
            <person name="Tin-Wollam A.-M."/>
            <person name="Abbott A."/>
            <person name="Minx P."/>
            <person name="Maupin R."/>
            <person name="Strowmatt C."/>
            <person name="Latreille P."/>
            <person name="Miller N."/>
            <person name="Johnson D."/>
            <person name="Murray J."/>
            <person name="Woessner J.P."/>
            <person name="Wendl M.C."/>
            <person name="Yang S.-P."/>
            <person name="Schultz B.R."/>
            <person name="Wallis J.W."/>
            <person name="Spieth J."/>
            <person name="Bieri T.A."/>
            <person name="Nelson J.O."/>
            <person name="Berkowicz N."/>
            <person name="Wohldmann P.E."/>
            <person name="Cook L.L."/>
            <person name="Hickenbotham M.T."/>
            <person name="Eldred J."/>
            <person name="Williams D."/>
            <person name="Bedell J.A."/>
            <person name="Mardis E.R."/>
            <person name="Clifton S.W."/>
            <person name="Chissoe S.L."/>
            <person name="Marra M.A."/>
            <person name="Raymond C."/>
            <person name="Haugen E."/>
            <person name="Gillett W."/>
            <person name="Zhou Y."/>
            <person name="James R."/>
            <person name="Phelps K."/>
            <person name="Iadanoto S."/>
            <person name="Bubb K."/>
            <person name="Simms E."/>
            <person name="Levy R."/>
            <person name="Clendenning J."/>
            <person name="Kaul R."/>
            <person name="Kent W.J."/>
            <person name="Furey T.S."/>
            <person name="Baertsch R.A."/>
            <person name="Brent M.R."/>
            <person name="Keibler E."/>
            <person name="Flicek P."/>
            <person name="Bork P."/>
            <person name="Suyama M."/>
            <person name="Bailey J.A."/>
            <person name="Portnoy M.E."/>
            <person name="Torrents D."/>
            <person name="Chinwalla A.T."/>
            <person name="Gish W.R."/>
            <person name="Eddy S.R."/>
            <person name="McPherson J.D."/>
            <person name="Olson M.V."/>
            <person name="Eichler E.E."/>
            <person name="Green E.D."/>
            <person name="Waterston R.H."/>
            <person name="Wilson R.K."/>
        </authorList>
    </citation>
    <scope>NUCLEOTIDE SEQUENCE [LARGE SCALE GENOMIC DNA]</scope>
</reference>
<reference key="8">
    <citation type="journal article" date="2004" name="Genome Res.">
        <title>The status, quality, and expansion of the NIH full-length cDNA project: the Mammalian Gene Collection (MGC).</title>
        <authorList>
            <consortium name="The MGC Project Team"/>
        </authorList>
    </citation>
    <scope>NUCLEOTIDE SEQUENCE [LARGE SCALE MRNA] (ISOFORM 1)</scope>
    <scope>VARIANT VAL-652</scope>
    <source>
        <tissue>Uterus</tissue>
    </source>
</reference>
<reference key="9">
    <citation type="journal article" date="2001" name="Proc. Natl. Acad. Sci. U.S.A.">
        <title>Repression of TFII-I-dependent transcription by nuclear exclusion.</title>
        <authorList>
            <person name="Tussie-Luna M.I."/>
            <person name="Bayarsaihan D."/>
            <person name="Ruddle F.H."/>
            <person name="Roy A.L."/>
        </authorList>
    </citation>
    <scope>FUNCTION</scope>
</reference>
<reference key="10">
    <citation type="journal article" date="2006" name="Cell">
        <title>Global, in vivo, and site-specific phosphorylation dynamics in signaling networks.</title>
        <authorList>
            <person name="Olsen J.V."/>
            <person name="Blagoev B."/>
            <person name="Gnad F."/>
            <person name="Macek B."/>
            <person name="Kumar C."/>
            <person name="Mortensen P."/>
            <person name="Mann M."/>
        </authorList>
    </citation>
    <scope>PHOSPHORYLATION [LARGE SCALE ANALYSIS] AT SER-448</scope>
    <scope>IDENTIFICATION BY MASS SPECTROMETRY [LARGE SCALE ANALYSIS]</scope>
    <source>
        <tissue>Cervix carcinoma</tissue>
    </source>
</reference>
<reference key="11">
    <citation type="journal article" date="2007" name="Science">
        <title>ATM and ATR substrate analysis reveals extensive protein networks responsive to DNA damage.</title>
        <authorList>
            <person name="Matsuoka S."/>
            <person name="Ballif B.A."/>
            <person name="Smogorzewska A."/>
            <person name="McDonald E.R. III"/>
            <person name="Hurov K.E."/>
            <person name="Luo J."/>
            <person name="Bakalarski C.E."/>
            <person name="Zhao Z."/>
            <person name="Solimini N."/>
            <person name="Lerenthal Y."/>
            <person name="Shiloh Y."/>
            <person name="Gygi S.P."/>
            <person name="Elledge S.J."/>
        </authorList>
    </citation>
    <scope>PHOSPHORYLATION [LARGE SCALE ANALYSIS] AT SER-654 (ISOFORM 2)</scope>
    <scope>PHOSPHORYLATION [LARGE SCALE ANALYSIS] AT SER-686 (ISOFORM 3)</scope>
    <scope>IDENTIFICATION BY MASS SPECTROMETRY [LARGE SCALE ANALYSIS]</scope>
    <source>
        <tissue>Embryonic kidney</tissue>
    </source>
</reference>
<reference key="12">
    <citation type="journal article" date="2008" name="Proc. Natl. Acad. Sci. U.S.A.">
        <title>A quantitative atlas of mitotic phosphorylation.</title>
        <authorList>
            <person name="Dephoure N."/>
            <person name="Zhou C."/>
            <person name="Villen J."/>
            <person name="Beausoleil S.A."/>
            <person name="Bakalarski C.E."/>
            <person name="Elledge S.J."/>
            <person name="Gygi S.P."/>
        </authorList>
    </citation>
    <scope>PHOSPHORYLATION [LARGE SCALE ANALYSIS] AT SER-448</scope>
    <scope>IDENTIFICATION BY MASS SPECTROMETRY [LARGE SCALE ANALYSIS]</scope>
    <source>
        <tissue>Cervix carcinoma</tissue>
    </source>
</reference>
<reference key="13">
    <citation type="journal article" date="2010" name="Sci. Signal.">
        <title>Quantitative phosphoproteomics reveals widespread full phosphorylation site occupancy during mitosis.</title>
        <authorList>
            <person name="Olsen J.V."/>
            <person name="Vermeulen M."/>
            <person name="Santamaria A."/>
            <person name="Kumar C."/>
            <person name="Miller M.L."/>
            <person name="Jensen L.J."/>
            <person name="Gnad F."/>
            <person name="Cox J."/>
            <person name="Jensen T.S."/>
            <person name="Nigg E.A."/>
            <person name="Brunak S."/>
            <person name="Mann M."/>
        </authorList>
    </citation>
    <scope>PHOSPHORYLATION [LARGE SCALE ANALYSIS] AT SER-448</scope>
    <scope>IDENTIFICATION BY MASS SPECTROMETRY [LARGE SCALE ANALYSIS]</scope>
    <source>
        <tissue>Cervix carcinoma</tissue>
    </source>
</reference>
<reference key="14">
    <citation type="journal article" date="2013" name="J. Proteome Res.">
        <title>Toward a comprehensive characterization of a human cancer cell phosphoproteome.</title>
        <authorList>
            <person name="Zhou H."/>
            <person name="Di Palma S."/>
            <person name="Preisinger C."/>
            <person name="Peng M."/>
            <person name="Polat A.N."/>
            <person name="Heck A.J."/>
            <person name="Mohammed S."/>
        </authorList>
    </citation>
    <scope>PHOSPHORYLATION [LARGE SCALE ANALYSIS] AT SER-448</scope>
    <scope>IDENTIFICATION BY MASS SPECTROMETRY [LARGE SCALE ANALYSIS]</scope>
    <source>
        <tissue>Cervix carcinoma</tissue>
        <tissue>Erythroleukemia</tissue>
    </source>
</reference>
<reference key="15">
    <citation type="journal article" date="2014" name="Nat. Struct. Mol. Biol.">
        <title>Uncovering global SUMOylation signaling networks in a site-specific manner.</title>
        <authorList>
            <person name="Hendriks I.A."/>
            <person name="D'Souza R.C."/>
            <person name="Yang B."/>
            <person name="Verlaan-de Vries M."/>
            <person name="Mann M."/>
            <person name="Vertegaal A.C."/>
        </authorList>
    </citation>
    <scope>SUMOYLATION [LARGE SCALE ANALYSIS] AT LYS-212; LYS-225; LYS-271; LYS-337; LYS-436; LYS-443; LYS-579; LYS-638; LYS-684 AND LYS-787</scope>
    <scope>IDENTIFICATION BY MASS SPECTROMETRY [LARGE SCALE ANALYSIS]</scope>
</reference>
<reference key="16">
    <citation type="journal article" date="2014" name="Proc. Natl. Acad. Sci. U.S.A.">
        <title>Mapping of SUMO sites and analysis of SUMOylation changes induced by external stimuli.</title>
        <authorList>
            <person name="Impens F."/>
            <person name="Radoshevich L."/>
            <person name="Cossart P."/>
            <person name="Ribet D."/>
        </authorList>
    </citation>
    <scope>SUMOYLATION [LARGE SCALE ANALYSIS] AT LYS-443</scope>
    <scope>IDENTIFICATION BY MASS SPECTROMETRY [LARGE SCALE ANALYSIS]</scope>
</reference>
<reference key="17">
    <citation type="journal article" date="2015" name="Cell Rep.">
        <title>SUMO-2 orchestrates chromatin modifiers in response to DNA damage.</title>
        <authorList>
            <person name="Hendriks I.A."/>
            <person name="Treffers L.W."/>
            <person name="Verlaan-de Vries M."/>
            <person name="Olsen J.V."/>
            <person name="Vertegaal A.C."/>
        </authorList>
    </citation>
    <scope>SUMOYLATION [LARGE SCALE ANALYSIS] AT LYS-212; LYS-225; LYS-271; LYS-308; LYS-337; LYS-436; LYS-443; LYS-638; LYS-724; LYS-787; LYS-829 AND LYS-889</scope>
    <scope>IDENTIFICATION BY MASS SPECTROMETRY [LARGE SCALE ANALYSIS]</scope>
</reference>
<reference key="18">
    <citation type="journal article" date="2015" name="Mol. Cell. Proteomics">
        <title>System-wide analysis of SUMOylation dynamics in response to replication stress reveals novel small ubiquitin-like modified target proteins and acceptor lysines relevant for genome stability.</title>
        <authorList>
            <person name="Xiao Z."/>
            <person name="Chang J.G."/>
            <person name="Hendriks I.A."/>
            <person name="Sigurdsson J.O."/>
            <person name="Olsen J.V."/>
            <person name="Vertegaal A.C."/>
        </authorList>
    </citation>
    <scope>SUMOYLATION [LARGE SCALE ANALYSIS] AT LYS-271; LYS-436; LYS-443; LYS-638 AND LYS-724</scope>
    <scope>IDENTIFICATION BY MASS SPECTROMETRY [LARGE SCALE ANALYSIS]</scope>
</reference>
<reference key="19">
    <citation type="journal article" date="2017" name="Nat. Struct. Mol. Biol.">
        <title>Site-specific mapping of the human SUMO proteome reveals co-modification with phosphorylation.</title>
        <authorList>
            <person name="Hendriks I.A."/>
            <person name="Lyon D."/>
            <person name="Young C."/>
            <person name="Jensen L.J."/>
            <person name="Vertegaal A.C."/>
            <person name="Nielsen M.L."/>
        </authorList>
    </citation>
    <scope>SUMOYLATION [LARGE SCALE ANALYSIS] AT LYS-27; LYS-94; LYS-184; LYS-212; LYS-225; LYS-238; LYS-271; LYS-294; LYS-308; LYS-337; LYS-436; LYS-439; LYS-443; LYS-567; LYS-579; LYS-588; LYS-622; LYS-638; LYS-684; LYS-724; LYS-732; LYS-772; LYS-774; LYS-787; LYS-829; LYS-889 AND LYS-893</scope>
    <scope>SUMOYLATION [LARGE SCALE ANALYSIS] AT LYS-638; LYS-648 AND LYS-669 (ISOFORM 2)</scope>
    <scope>SUMOYLATION [LARGE SCALE ANALYSIS] AT LYS-670; LYS-680 AND LYS-701 (ISOFORM 3)</scope>
    <scope>IDENTIFICATION BY MASS SPECTROMETRY [LARGE SCALE ANALYSIS]</scope>
</reference>
<reference key="20">
    <citation type="submission" date="2007-03" db="PDB data bank">
        <title>Solution structure of RSGI RUH-048 and RUH-057, a GTF2I domain in human.</title>
        <authorList>
            <consortium name="RIKEN structural genomics initiative (RSGI)"/>
        </authorList>
    </citation>
    <scope>STRUCTURE BY NMR OF 128-203 AND 565-877</scope>
</reference>
<name>GT2D1_HUMAN</name>
<comment type="function">
    <text evidence="1 7">May be a transcription regulator involved in cell-cycle progression and skeletal muscle differentiation. May repress GTF2I transcriptional functions, by preventing its nuclear residency, or by inhibiting its transcriptional activation. May contribute to slow-twitch fiber type specificity during myogenesis and in regenerating muscles. Binds troponin I slow-muscle fiber enhancer (USE B1). Binds specifically and with high affinity to the EFG sequences derived from the early enhancer of HOXC8 (By similarity).</text>
</comment>
<comment type="subunit">
    <text evidence="6">Interacts with the retinoblastoma protein (RB1) via its C-terminus.</text>
</comment>
<comment type="interaction">
    <interactant intactId="EBI-372530">
        <id>Q9UHL9</id>
    </interactant>
    <interactant intactId="EBI-928732">
        <id>Q6VMQ6</id>
        <label>ATF7IP</label>
    </interactant>
    <organismsDiffer>false</organismsDiffer>
    <experiments>3</experiments>
</comment>
<comment type="interaction">
    <interactant intactId="EBI-372530">
        <id>Q9UHL9</id>
    </interactant>
    <interactant intactId="EBI-2559044">
        <id>Q58WW2</id>
        <label>DCAF6</label>
    </interactant>
    <organismsDiffer>false</organismsDiffer>
    <experiments>2</experiments>
</comment>
<comment type="interaction">
    <interactant intactId="EBI-372530">
        <id>Q9UHL9</id>
    </interactant>
    <interactant intactId="EBI-739467">
        <id>Q9H8Y8</id>
        <label>GORASP2</label>
    </interactant>
    <organismsDiffer>false</organismsDiffer>
    <experiments>3</experiments>
</comment>
<comment type="interaction">
    <interactant intactId="EBI-372530">
        <id>Q9UHL9</id>
    </interactant>
    <interactant intactId="EBI-1049156">
        <id>Q96CB8</id>
        <label>INTS12</label>
    </interactant>
    <organismsDiffer>false</organismsDiffer>
    <experiments>3</experiments>
</comment>
<comment type="interaction">
    <interactant intactId="EBI-372530">
        <id>Q9UHL9</id>
    </interactant>
    <interactant intactId="EBI-12516603">
        <id>Q8WWY6</id>
        <label>MBD3L1</label>
    </interactant>
    <organismsDiffer>false</organismsDiffer>
    <experiments>3</experiments>
</comment>
<comment type="interaction">
    <interactant intactId="EBI-372530">
        <id>Q9UHL9</id>
    </interactant>
    <interactant intactId="EBI-748896">
        <id>Q96HT8</id>
        <label>MRFAP1L1</label>
    </interactant>
    <organismsDiffer>false</organismsDiffer>
    <experiments>3</experiments>
</comment>
<comment type="interaction">
    <interactant intactId="EBI-372530">
        <id>Q9UHL9</id>
    </interactant>
    <interactant intactId="EBI-2513407">
        <id>Q13835</id>
        <label>PKP1</label>
    </interactant>
    <organismsDiffer>false</organismsDiffer>
    <experiments>2</experiments>
</comment>
<comment type="interaction">
    <interactant intactId="EBI-372530">
        <id>Q9UHL9</id>
    </interactant>
    <interactant intactId="EBI-2797576">
        <id>Q9UBW7</id>
        <label>ZMYM2</label>
    </interactant>
    <organismsDiffer>false</organismsDiffer>
    <experiments>5</experiments>
</comment>
<comment type="interaction">
    <interactant intactId="EBI-372530">
        <id>Q9UHL9</id>
    </interactant>
    <interactant intactId="EBI-12516872">
        <id>Q80W88</id>
        <label>Homez</label>
    </interactant>
    <organismsDiffer>true</organismsDiffer>
    <experiments>2</experiments>
</comment>
<comment type="interaction">
    <interactant intactId="EBI-372530">
        <id>Q9UHL9</id>
    </interactant>
    <interactant intactId="EBI-12516895">
        <id>P51860</id>
        <label>Nap1l2</label>
    </interactant>
    <organismsDiffer>true</organismsDiffer>
    <experiments>3</experiments>
</comment>
<comment type="interaction">
    <interactant intactId="EBI-372530">
        <id>Q9UHL9</id>
    </interactant>
    <interactant intactId="EBI-10768425">
        <id>Q9CWY3</id>
        <label>Setd6</label>
    </interactant>
    <organismsDiffer>true</organismsDiffer>
    <experiments>3</experiments>
</comment>
<comment type="interaction">
    <interactant intactId="EBI-372530">
        <id>Q9UHL9</id>
    </interactant>
    <interactant intactId="EBI-12517169">
        <id>Q9JLM4</id>
        <label>Zmym3</label>
    </interactant>
    <organismsDiffer>true</organismsDiffer>
    <experiments>3</experiments>
</comment>
<comment type="subcellular location">
    <subcellularLocation>
        <location>Nucleus</location>
    </subcellularLocation>
</comment>
<comment type="alternative products">
    <event type="alternative splicing"/>
    <isoform>
        <id>Q9UHL9-1</id>
        <name>1</name>
        <sequence type="displayed"/>
    </isoform>
    <isoform>
        <id>Q9UHL9-2</id>
        <name>2</name>
        <sequence type="described" ref="VSP_003873"/>
    </isoform>
    <isoform>
        <id>Q9UHL9-3</id>
        <name>3</name>
        <sequence type="described" ref="VSP_043425 VSP_003873"/>
    </isoform>
</comment>
<comment type="tissue specificity">
    <text>Highly expressed in adult skeletal muscle, heart, fibroblast, bone and fetal tissues. Expressed at lower levels in all other tissues tested.</text>
</comment>
<comment type="developmental stage">
    <text>Highly expressed in developing and regenerating muscles, at the time of myofiber diversification.</text>
</comment>
<comment type="domain">
    <text>The N-terminal half may have an activating activity.</text>
</comment>
<comment type="disease">
    <text>GTF2IRD1 is located in the Williams-Beuren syndrome (WBS) critical region. WBS results from a hemizygous deletion of several genes on chromosome 7q11.23, thought to arise as a consequence of unequal crossing over between highly homologous low-copy repeat sequences flanking the deleted region. Haploinsufficiency of GTF2IRD1 may be the cause of certain cardiovascular and musculo-skeletal abnormalities observed in the disease.</text>
</comment>
<comment type="similarity">
    <text evidence="3">Belongs to the TFII-I family.</text>
</comment>
<protein>
    <recommendedName>
        <fullName>General transcription factor II-I repeat domain-containing protein 1</fullName>
        <shortName>GTF2I repeat domain-containing protein 1</shortName>
    </recommendedName>
    <alternativeName>
        <fullName>General transcription factor III</fullName>
    </alternativeName>
    <alternativeName>
        <fullName>MusTRD1/BEN</fullName>
    </alternativeName>
    <alternativeName>
        <fullName>Muscle TFII-I repeat domain-containing protein 1</fullName>
    </alternativeName>
    <alternativeName>
        <fullName>Slow-muscle-fiber enhancer-binding protein</fullName>
    </alternativeName>
    <alternativeName>
        <fullName>USE B1-binding protein</fullName>
    </alternativeName>
    <alternativeName>
        <fullName>Williams-Beuren syndrome chromosomal region 11 protein</fullName>
    </alternativeName>
    <alternativeName>
        <fullName>Williams-Beuren syndrome chromosomal region 12 protein</fullName>
    </alternativeName>
</protein>
<keyword id="KW-0002">3D-structure</keyword>
<keyword id="KW-0025">Alternative splicing</keyword>
<keyword id="KW-0217">Developmental protein</keyword>
<keyword id="KW-0238">DNA-binding</keyword>
<keyword id="KW-1017">Isopeptide bond</keyword>
<keyword id="KW-0539">Nucleus</keyword>
<keyword id="KW-0597">Phosphoprotein</keyword>
<keyword id="KW-1267">Proteomics identification</keyword>
<keyword id="KW-1185">Reference proteome</keyword>
<keyword id="KW-0677">Repeat</keyword>
<keyword id="KW-0804">Transcription</keyword>
<keyword id="KW-0805">Transcription regulation</keyword>
<keyword id="KW-0832">Ubl conjugation</keyword>
<keyword id="KW-0856">Williams-Beuren syndrome</keyword>
<feature type="chain" id="PRO_0000083870" description="General transcription factor II-I repeat domain-containing protein 1">
    <location>
        <begin position="1"/>
        <end position="959"/>
    </location>
</feature>
<feature type="repeat" description="GTF2I-like 1">
    <location>
        <begin position="119"/>
        <end position="213"/>
    </location>
</feature>
<feature type="repeat" description="GTF2I-like 2">
    <location>
        <begin position="342"/>
        <end position="436"/>
    </location>
</feature>
<feature type="repeat" description="GTF2I-like 3">
    <location>
        <begin position="556"/>
        <end position="650"/>
    </location>
</feature>
<feature type="repeat" description="GTF2I-like 4">
    <location>
        <begin position="696"/>
        <end position="790"/>
    </location>
</feature>
<feature type="repeat" description="GTF2I-like 5">
    <location>
        <begin position="793"/>
        <end position="887"/>
    </location>
</feature>
<feature type="region of interest" description="Disordered" evidence="4">
    <location>
        <begin position="96"/>
        <end position="117"/>
    </location>
</feature>
<feature type="region of interest" description="Disordered" evidence="4">
    <location>
        <begin position="230"/>
        <end position="250"/>
    </location>
</feature>
<feature type="region of interest" description="Disordered" evidence="4">
    <location>
        <begin position="468"/>
        <end position="492"/>
    </location>
</feature>
<feature type="region of interest" description="Disordered" evidence="4">
    <location>
        <begin position="654"/>
        <end position="679"/>
    </location>
</feature>
<feature type="region of interest" description="Disordered" evidence="4">
    <location>
        <begin position="892"/>
        <end position="927"/>
    </location>
</feature>
<feature type="short sequence motif" description="Nuclear localization signal" evidence="2">
    <location>
        <begin position="898"/>
        <end position="905"/>
    </location>
</feature>
<feature type="compositionally biased region" description="Basic and acidic residues" evidence="4">
    <location>
        <begin position="96"/>
        <end position="106"/>
    </location>
</feature>
<feature type="compositionally biased region" description="Low complexity" evidence="4">
    <location>
        <begin position="910"/>
        <end position="923"/>
    </location>
</feature>
<feature type="modified residue" description="Phosphoserine" evidence="14 16 17 18">
    <location>
        <position position="448"/>
    </location>
</feature>
<feature type="cross-link" description="Glycyl lysine isopeptide (Lys-Gly) (interchain with G-Cter in SUMO2)" evidence="23">
    <location>
        <position position="27"/>
    </location>
</feature>
<feature type="cross-link" description="Glycyl lysine isopeptide (Lys-Gly) (interchain with G-Cter in SUMO2)" evidence="23">
    <location>
        <position position="94"/>
    </location>
</feature>
<feature type="cross-link" description="Glycyl lysine isopeptide (Lys-Gly) (interchain with G-Cter in SUMO2)" evidence="23">
    <location>
        <position position="184"/>
    </location>
</feature>
<feature type="cross-link" description="Glycyl lysine isopeptide (Lys-Gly) (interchain with G-Cter in SUMO2)" evidence="20 22 23">
    <location>
        <position position="212"/>
    </location>
</feature>
<feature type="cross-link" description="Glycyl lysine isopeptide (Lys-Gly) (interchain with G-Cter in SUMO2)" evidence="20 22 23">
    <location>
        <position position="225"/>
    </location>
</feature>
<feature type="cross-link" description="Glycyl lysine isopeptide (Lys-Gly) (interchain with G-Cter in SUMO2)" evidence="23">
    <location>
        <position position="238"/>
    </location>
</feature>
<feature type="cross-link" description="Glycyl lysine isopeptide (Lys-Gly) (interchain with G-Cter in SUMO2)" evidence="20 21 22 23">
    <location>
        <position position="271"/>
    </location>
</feature>
<feature type="cross-link" description="Glycyl lysine isopeptide (Lys-Gly) (interchain with G-Cter in SUMO2)" evidence="23">
    <location>
        <position position="294"/>
    </location>
</feature>
<feature type="cross-link" description="Glycyl lysine isopeptide (Lys-Gly) (interchain with G-Cter in SUMO2)" evidence="22 23">
    <location>
        <position position="308"/>
    </location>
</feature>
<feature type="cross-link" description="Glycyl lysine isopeptide (Lys-Gly) (interchain with G-Cter in SUMO2)" evidence="20 22 23">
    <location>
        <position position="337"/>
    </location>
</feature>
<feature type="cross-link" description="Glycyl lysine isopeptide (Lys-Gly) (interchain with G-Cter in SUMO2)" evidence="20 21 22 23">
    <location>
        <position position="436"/>
    </location>
</feature>
<feature type="cross-link" description="Glycyl lysine isopeptide (Lys-Gly) (interchain with G-Cter in SUMO2)" evidence="23">
    <location>
        <position position="439"/>
    </location>
</feature>
<feature type="cross-link" description="Glycyl lysine isopeptide (Lys-Gly) (interchain with G-Cter in SUMO2)" evidence="19 20 21 22 23">
    <location>
        <position position="443"/>
    </location>
</feature>
<feature type="cross-link" description="Glycyl lysine isopeptide (Lys-Gly) (interchain with G-Cter in SUMO2)" evidence="23">
    <location>
        <position position="567"/>
    </location>
</feature>
<feature type="cross-link" description="Glycyl lysine isopeptide (Lys-Gly) (interchain with G-Cter in SUMO2)" evidence="20 23">
    <location>
        <position position="579"/>
    </location>
</feature>
<feature type="cross-link" description="Glycyl lysine isopeptide (Lys-Gly) (interchain with G-Cter in SUMO2)" evidence="23">
    <location>
        <position position="588"/>
    </location>
</feature>
<feature type="cross-link" description="Glycyl lysine isopeptide (Lys-Gly) (interchain with G-Cter in SUMO2)" evidence="23">
    <location>
        <position position="622"/>
    </location>
</feature>
<feature type="cross-link" description="Glycyl lysine isopeptide (Lys-Gly) (interchain with G-Cter in SUMO2)" evidence="20 21 22 23">
    <location>
        <position position="638"/>
    </location>
</feature>
<feature type="cross-link" description="Glycyl lysine isopeptide (Lys-Gly) (interchain with G-Cter in SUMO2)" evidence="20 23">
    <location>
        <position position="684"/>
    </location>
</feature>
<feature type="cross-link" description="Glycyl lysine isopeptide (Lys-Gly) (interchain with G-Cter in SUMO2)" evidence="21 22 23">
    <location>
        <position position="724"/>
    </location>
</feature>
<feature type="cross-link" description="Glycyl lysine isopeptide (Lys-Gly) (interchain with G-Cter in SUMO2)" evidence="23">
    <location>
        <position position="732"/>
    </location>
</feature>
<feature type="cross-link" description="Glycyl lysine isopeptide (Lys-Gly) (interchain with G-Cter in SUMO2)" evidence="23">
    <location>
        <position position="772"/>
    </location>
</feature>
<feature type="cross-link" description="Glycyl lysine isopeptide (Lys-Gly) (interchain with G-Cter in SUMO2)" evidence="23">
    <location>
        <position position="774"/>
    </location>
</feature>
<feature type="cross-link" description="Glycyl lysine isopeptide (Lys-Gly) (interchain with G-Cter in SUMO2)" evidence="20 22 23">
    <location>
        <position position="787"/>
    </location>
</feature>
<feature type="cross-link" description="Glycyl lysine isopeptide (Lys-Gly) (interchain with G-Cter in SUMO2)" evidence="22 23">
    <location>
        <position position="829"/>
    </location>
</feature>
<feature type="cross-link" description="Glycyl lysine isopeptide (Lys-Gly) (interchain with G-Cter in SUMO2)" evidence="22 23">
    <location>
        <position position="889"/>
    </location>
</feature>
<feature type="cross-link" description="Glycyl lysine isopeptide (Lys-Gly) (interchain with G-Cter in SUMO2)" evidence="23">
    <location>
        <position position="893"/>
    </location>
</feature>
<feature type="splice variant" id="VSP_043425" description="In isoform 3." evidence="12">
    <original>R</original>
    <variation>LSAAQHRAATSQLEGRVVRRVLTVASRALCPTG</variation>
    <location>
        <position position="89"/>
    </location>
</feature>
<feature type="splice variant" id="VSP_003873" description="In isoform 2 and isoform 3." evidence="9 10 11 12">
    <location>
        <begin position="656"/>
        <end position="670"/>
    </location>
</feature>
<feature type="sequence variant" id="VAR_013446" description="In dbSNP:rs2301895." evidence="5 6 8">
    <original>M</original>
    <variation>V</variation>
    <location>
        <position position="652"/>
    </location>
</feature>
<feature type="mutagenesis site" description="Cytoplasmic localization." evidence="6">
    <location>
        <begin position="898"/>
        <end position="959"/>
    </location>
</feature>
<feature type="sequence conflict" description="In Ref. 1; AAD14687 and 2; AAD27668." evidence="13" ref="1 2">
    <original>G</original>
    <variation>S</variation>
    <location>
        <position position="111"/>
    </location>
</feature>
<feature type="sequence conflict" description="In Ref. 5; AAF21796." evidence="13" ref="5">
    <original>R</original>
    <variation>Q</variation>
    <location>
        <position position="378"/>
    </location>
</feature>
<feature type="helix" evidence="24">
    <location>
        <begin position="128"/>
        <end position="144"/>
    </location>
</feature>
<feature type="helix" evidence="24">
    <location>
        <begin position="154"/>
        <end position="159"/>
    </location>
</feature>
<feature type="turn" evidence="24">
    <location>
        <begin position="161"/>
        <end position="163"/>
    </location>
</feature>
<feature type="strand" evidence="24">
    <location>
        <begin position="164"/>
        <end position="168"/>
    </location>
</feature>
<feature type="turn" evidence="24">
    <location>
        <begin position="178"/>
        <end position="180"/>
    </location>
</feature>
<feature type="helix" evidence="24">
    <location>
        <begin position="183"/>
        <end position="192"/>
    </location>
</feature>
<feature type="turn" evidence="24">
    <location>
        <begin position="193"/>
        <end position="195"/>
    </location>
</feature>
<feature type="strand" evidence="24">
    <location>
        <begin position="197"/>
        <end position="203"/>
    </location>
</feature>
<feature type="helix" evidence="26">
    <location>
        <begin position="565"/>
        <end position="580"/>
    </location>
</feature>
<feature type="helix" evidence="26">
    <location>
        <begin position="591"/>
        <end position="596"/>
    </location>
</feature>
<feature type="turn" evidence="26">
    <location>
        <begin position="598"/>
        <end position="600"/>
    </location>
</feature>
<feature type="strand" evidence="26">
    <location>
        <begin position="601"/>
        <end position="605"/>
    </location>
</feature>
<feature type="turn" evidence="26">
    <location>
        <begin position="615"/>
        <end position="617"/>
    </location>
</feature>
<feature type="helix" evidence="26">
    <location>
        <begin position="620"/>
        <end position="628"/>
    </location>
</feature>
<feature type="turn" evidence="26">
    <location>
        <begin position="629"/>
        <end position="632"/>
    </location>
</feature>
<feature type="strand" evidence="26">
    <location>
        <begin position="634"/>
        <end position="638"/>
    </location>
</feature>
<feature type="helix" evidence="26">
    <location>
        <begin position="640"/>
        <end position="642"/>
    </location>
</feature>
<feature type="helix" evidence="27">
    <location>
        <begin position="705"/>
        <end position="721"/>
    </location>
</feature>
<feature type="helix" evidence="27">
    <location>
        <begin position="731"/>
        <end position="736"/>
    </location>
</feature>
<feature type="strand" evidence="27">
    <location>
        <begin position="738"/>
        <end position="745"/>
    </location>
</feature>
<feature type="helix" evidence="27">
    <location>
        <begin position="755"/>
        <end position="757"/>
    </location>
</feature>
<feature type="helix" evidence="27">
    <location>
        <begin position="760"/>
        <end position="769"/>
    </location>
</feature>
<feature type="turn" evidence="27">
    <location>
        <begin position="770"/>
        <end position="772"/>
    </location>
</feature>
<feature type="strand" evidence="27">
    <location>
        <begin position="774"/>
        <end position="777"/>
    </location>
</feature>
<feature type="helix" evidence="25">
    <location>
        <begin position="802"/>
        <end position="817"/>
    </location>
</feature>
<feature type="helix" evidence="25">
    <location>
        <begin position="828"/>
        <end position="833"/>
    </location>
</feature>
<feature type="strand" evidence="25">
    <location>
        <begin position="837"/>
        <end position="842"/>
    </location>
</feature>
<feature type="strand" evidence="25">
    <location>
        <begin position="852"/>
        <end position="854"/>
    </location>
</feature>
<feature type="helix" evidence="25">
    <location>
        <begin position="857"/>
        <end position="864"/>
    </location>
</feature>
<feature type="turn" evidence="25">
    <location>
        <begin position="865"/>
        <end position="869"/>
    </location>
</feature>
<feature type="strand" evidence="25">
    <location>
        <begin position="871"/>
        <end position="876"/>
    </location>
</feature>
<feature type="modified residue" description="Phosphoserine" evidence="15">
    <location sequence="Q9UHL9-2">
        <position position="654"/>
    </location>
</feature>
<feature type="cross-link" description="Glycyl lysine isopeptide (Lys-Gly) (interchain with G-Cter in SUMO2)" evidence="23">
    <location sequence="Q9UHL9-2">
        <position position="638"/>
    </location>
</feature>
<feature type="cross-link" description="Glycyl lysine isopeptide (Lys-Gly) (interchain with G-Cter in SUMO2)" evidence="23">
    <location sequence="Q9UHL9-2">
        <position position="648"/>
    </location>
</feature>
<feature type="cross-link" description="Glycyl lysine isopeptide (Lys-Gly) (interchain with G-Cter in SUMO2)" evidence="23">
    <location sequence="Q9UHL9-2">
        <position position="669"/>
    </location>
</feature>
<feature type="modified residue" description="Phosphoserine" evidence="15">
    <location sequence="Q9UHL9-3">
        <position position="686"/>
    </location>
</feature>
<feature type="cross-link" description="Glycyl lysine isopeptide (Lys-Gly) (interchain with G-Cter in SUMO2)" evidence="23">
    <location sequence="Q9UHL9-3">
        <position position="670"/>
    </location>
</feature>
<feature type="cross-link" description="Glycyl lysine isopeptide (Lys-Gly) (interchain with G-Cter in SUMO2)" evidence="23">
    <location sequence="Q9UHL9-3">
        <position position="680"/>
    </location>
</feature>
<feature type="cross-link" description="Glycyl lysine isopeptide (Lys-Gly) (interchain with G-Cter in SUMO2)" evidence="23">
    <location sequence="Q9UHL9-3">
        <position position="701"/>
    </location>
</feature>
<proteinExistence type="evidence at protein level"/>
<organism>
    <name type="scientific">Homo sapiens</name>
    <name type="common">Human</name>
    <dbReference type="NCBI Taxonomy" id="9606"/>
    <lineage>
        <taxon>Eukaryota</taxon>
        <taxon>Metazoa</taxon>
        <taxon>Chordata</taxon>
        <taxon>Craniata</taxon>
        <taxon>Vertebrata</taxon>
        <taxon>Euteleostomi</taxon>
        <taxon>Mammalia</taxon>
        <taxon>Eutheria</taxon>
        <taxon>Euarchontoglires</taxon>
        <taxon>Primates</taxon>
        <taxon>Haplorrhini</taxon>
        <taxon>Catarrhini</taxon>
        <taxon>Hominidae</taxon>
        <taxon>Homo</taxon>
    </lineage>
</organism>
<dbReference type="EMBL" id="AF118270">
    <property type="protein sequence ID" value="AAD14687.2"/>
    <property type="molecule type" value="mRNA"/>
</dbReference>
<dbReference type="EMBL" id="AF104923">
    <property type="protein sequence ID" value="AAD27668.1"/>
    <property type="molecule type" value="mRNA"/>
</dbReference>
<dbReference type="EMBL" id="AF151354">
    <property type="protein sequence ID" value="AAF19786.1"/>
    <property type="molecule type" value="mRNA"/>
</dbReference>
<dbReference type="EMBL" id="AF156489">
    <property type="protein sequence ID" value="AAF17358.1"/>
    <property type="molecule type" value="mRNA"/>
</dbReference>
<dbReference type="EMBL" id="AF089107">
    <property type="protein sequence ID" value="AAF21796.1"/>
    <property type="molecule type" value="mRNA"/>
</dbReference>
<dbReference type="EMBL" id="AY648295">
    <property type="protein sequence ID" value="AAT68469.1"/>
    <property type="molecule type" value="mRNA"/>
</dbReference>
<dbReference type="EMBL" id="AC004851">
    <property type="protein sequence ID" value="AAS00362.1"/>
    <property type="molecule type" value="Genomic_DNA"/>
</dbReference>
<dbReference type="EMBL" id="AC005015">
    <property type="status" value="NOT_ANNOTATED_CDS"/>
    <property type="molecule type" value="Genomic_DNA"/>
</dbReference>
<dbReference type="EMBL" id="AC005231">
    <property type="protein sequence ID" value="AAP21877.1"/>
    <property type="molecule type" value="Genomic_DNA"/>
</dbReference>
<dbReference type="EMBL" id="BC018136">
    <property type="protein sequence ID" value="AAH18136.1"/>
    <property type="molecule type" value="mRNA"/>
</dbReference>
<dbReference type="CCDS" id="CCDS47613.1">
    <molecule id="Q9UHL9-2"/>
</dbReference>
<dbReference type="CCDS" id="CCDS5571.1">
    <molecule id="Q9UHL9-1"/>
</dbReference>
<dbReference type="CCDS" id="CCDS56492.1">
    <molecule id="Q9UHL9-3"/>
</dbReference>
<dbReference type="RefSeq" id="NP_001186136.1">
    <molecule id="Q9UHL9-3"/>
    <property type="nucleotide sequence ID" value="NM_001199207.2"/>
</dbReference>
<dbReference type="RefSeq" id="NP_005676.3">
    <molecule id="Q9UHL9-2"/>
    <property type="nucleotide sequence ID" value="NM_005685.3"/>
</dbReference>
<dbReference type="RefSeq" id="NP_057412.1">
    <molecule id="Q9UHL9-1"/>
    <property type="nucleotide sequence ID" value="NM_016328.3"/>
</dbReference>
<dbReference type="RefSeq" id="XP_016868293.1">
    <molecule id="Q9UHL9-2"/>
    <property type="nucleotide sequence ID" value="XM_017012804.2"/>
</dbReference>
<dbReference type="RefSeq" id="XP_047277018.1">
    <molecule id="Q9UHL9-1"/>
    <property type="nucleotide sequence ID" value="XM_047421062.1"/>
</dbReference>
<dbReference type="RefSeq" id="XP_047277019.1">
    <molecule id="Q9UHL9-1"/>
    <property type="nucleotide sequence ID" value="XM_047421063.1"/>
</dbReference>
<dbReference type="RefSeq" id="XP_047277021.1">
    <molecule id="Q9UHL9-2"/>
    <property type="nucleotide sequence ID" value="XM_047421065.1"/>
</dbReference>
<dbReference type="RefSeq" id="XP_054215362.1">
    <molecule id="Q9UHL9-1"/>
    <property type="nucleotide sequence ID" value="XM_054359387.1"/>
</dbReference>
<dbReference type="RefSeq" id="XP_054215363.1">
    <molecule id="Q9UHL9-1"/>
    <property type="nucleotide sequence ID" value="XM_054359388.1"/>
</dbReference>
<dbReference type="RefSeq" id="XP_054215365.1">
    <molecule id="Q9UHL9-2"/>
    <property type="nucleotide sequence ID" value="XM_054359390.1"/>
</dbReference>
<dbReference type="RefSeq" id="XP_054215366.1">
    <molecule id="Q9UHL9-2"/>
    <property type="nucleotide sequence ID" value="XM_054359391.1"/>
</dbReference>
<dbReference type="PDB" id="2D99">
    <property type="method" value="NMR"/>
    <property type="chains" value="A=128-203"/>
</dbReference>
<dbReference type="PDB" id="2DN5">
    <property type="method" value="NMR"/>
    <property type="chains" value="A=802-877"/>
</dbReference>
<dbReference type="PDB" id="2DZQ">
    <property type="method" value="NMR"/>
    <property type="chains" value="A=565-650"/>
</dbReference>
<dbReference type="PDB" id="2DZR">
    <property type="method" value="NMR"/>
    <property type="chains" value="A=705-790"/>
</dbReference>
<dbReference type="PDBsum" id="2D99"/>
<dbReference type="PDBsum" id="2DN5"/>
<dbReference type="PDBsum" id="2DZQ"/>
<dbReference type="PDBsum" id="2DZR"/>
<dbReference type="SMR" id="Q9UHL9"/>
<dbReference type="BioGRID" id="114939">
    <property type="interactions" value="124"/>
</dbReference>
<dbReference type="FunCoup" id="Q9UHL9">
    <property type="interactions" value="2632"/>
</dbReference>
<dbReference type="IntAct" id="Q9UHL9">
    <property type="interactions" value="95"/>
</dbReference>
<dbReference type="MINT" id="Q9UHL9"/>
<dbReference type="STRING" id="9606.ENSP00000397566"/>
<dbReference type="CarbonylDB" id="Q9UHL9"/>
<dbReference type="iPTMnet" id="Q9UHL9"/>
<dbReference type="PhosphoSitePlus" id="Q9UHL9"/>
<dbReference type="BioMuta" id="GTF2IRD1"/>
<dbReference type="DMDM" id="21263630"/>
<dbReference type="jPOST" id="Q9UHL9"/>
<dbReference type="MassIVE" id="Q9UHL9"/>
<dbReference type="PaxDb" id="9606-ENSP00000397566"/>
<dbReference type="PeptideAtlas" id="Q9UHL9"/>
<dbReference type="ProteomicsDB" id="84377">
    <molecule id="Q9UHL9-1"/>
</dbReference>
<dbReference type="ProteomicsDB" id="84378">
    <molecule id="Q9UHL9-2"/>
</dbReference>
<dbReference type="ProteomicsDB" id="84379">
    <molecule id="Q9UHL9-3"/>
</dbReference>
<dbReference type="Antibodypedia" id="14624">
    <property type="antibodies" value="388 antibodies from 32 providers"/>
</dbReference>
<dbReference type="DNASU" id="9569"/>
<dbReference type="Ensembl" id="ENST00000265755.7">
    <molecule id="Q9UHL9-1"/>
    <property type="protein sequence ID" value="ENSP00000265755.3"/>
    <property type="gene ID" value="ENSG00000006704.11"/>
</dbReference>
<dbReference type="Ensembl" id="ENST00000424337.7">
    <molecule id="Q9UHL9-2"/>
    <property type="protein sequence ID" value="ENSP00000408477.2"/>
    <property type="gene ID" value="ENSG00000006704.11"/>
</dbReference>
<dbReference type="Ensembl" id="ENST00000455841.6">
    <molecule id="Q9UHL9-3"/>
    <property type="protein sequence ID" value="ENSP00000397566.2"/>
    <property type="gene ID" value="ENSG00000006704.11"/>
</dbReference>
<dbReference type="GeneID" id="9569"/>
<dbReference type="KEGG" id="hsa:9569"/>
<dbReference type="MANE-Select" id="ENST00000424337.7">
    <molecule id="Q9UHL9-2"/>
    <property type="protein sequence ID" value="ENSP00000408477.2"/>
    <property type="RefSeq nucleotide sequence ID" value="NM_005685.4"/>
    <property type="RefSeq protein sequence ID" value="NP_005676.3"/>
</dbReference>
<dbReference type="UCSC" id="uc032zrv.2">
    <molecule id="Q9UHL9-1"/>
    <property type="organism name" value="human"/>
</dbReference>
<dbReference type="AGR" id="HGNC:4661"/>
<dbReference type="CTD" id="9569"/>
<dbReference type="DisGeNET" id="9569"/>
<dbReference type="GeneCards" id="GTF2IRD1"/>
<dbReference type="GeneReviews" id="GTF2IRD1"/>
<dbReference type="HGNC" id="HGNC:4661">
    <property type="gene designation" value="GTF2IRD1"/>
</dbReference>
<dbReference type="HPA" id="ENSG00000006704">
    <property type="expression patterns" value="Tissue enhanced (skeletal)"/>
</dbReference>
<dbReference type="MalaCards" id="GTF2IRD1"/>
<dbReference type="MIM" id="604318">
    <property type="type" value="gene"/>
</dbReference>
<dbReference type="neXtProt" id="NX_Q9UHL9"/>
<dbReference type="OpenTargets" id="ENSG00000006704"/>
<dbReference type="Orphanet" id="904">
    <property type="disease" value="Williams syndrome"/>
</dbReference>
<dbReference type="PharmGKB" id="PA29047"/>
<dbReference type="VEuPathDB" id="HostDB:ENSG00000006704"/>
<dbReference type="eggNOG" id="ENOG502QPVX">
    <property type="taxonomic scope" value="Eukaryota"/>
</dbReference>
<dbReference type="GeneTree" id="ENSGT00940000159414"/>
<dbReference type="HOGENOM" id="CLU_014412_0_0_1"/>
<dbReference type="InParanoid" id="Q9UHL9"/>
<dbReference type="OMA" id="VFDVLYX"/>
<dbReference type="OrthoDB" id="9876044at2759"/>
<dbReference type="PAN-GO" id="Q9UHL9">
    <property type="GO annotations" value="2 GO annotations based on evolutionary models"/>
</dbReference>
<dbReference type="PhylomeDB" id="Q9UHL9"/>
<dbReference type="TreeFam" id="TF352524"/>
<dbReference type="PathwayCommons" id="Q9UHL9"/>
<dbReference type="SignaLink" id="Q9UHL9"/>
<dbReference type="SIGNOR" id="Q9UHL9"/>
<dbReference type="BioGRID-ORCS" id="9569">
    <property type="hits" value="17 hits in 1158 CRISPR screens"/>
</dbReference>
<dbReference type="ChiTaRS" id="GTF2IRD1">
    <property type="organism name" value="human"/>
</dbReference>
<dbReference type="EvolutionaryTrace" id="Q9UHL9"/>
<dbReference type="GeneWiki" id="GTF2IRD1"/>
<dbReference type="GenomeRNAi" id="9569"/>
<dbReference type="Pharos" id="Q9UHL9">
    <property type="development level" value="Tbio"/>
</dbReference>
<dbReference type="PRO" id="PR:Q9UHL9"/>
<dbReference type="Proteomes" id="UP000005640">
    <property type="component" value="Chromosome 7"/>
</dbReference>
<dbReference type="RNAct" id="Q9UHL9">
    <property type="molecule type" value="protein"/>
</dbReference>
<dbReference type="Bgee" id="ENSG00000006704">
    <property type="expression patterns" value="Expressed in lower esophagus mucosa and 193 other cell types or tissues"/>
</dbReference>
<dbReference type="ExpressionAtlas" id="Q9UHL9">
    <property type="expression patterns" value="baseline and differential"/>
</dbReference>
<dbReference type="GO" id="GO:0005829">
    <property type="term" value="C:cytosol"/>
    <property type="evidence" value="ECO:0000314"/>
    <property type="project" value="HPA"/>
</dbReference>
<dbReference type="GO" id="GO:0005654">
    <property type="term" value="C:nucleoplasm"/>
    <property type="evidence" value="ECO:0000314"/>
    <property type="project" value="HPA"/>
</dbReference>
<dbReference type="GO" id="GO:0005634">
    <property type="term" value="C:nucleus"/>
    <property type="evidence" value="ECO:0000318"/>
    <property type="project" value="GO_Central"/>
</dbReference>
<dbReference type="GO" id="GO:0003700">
    <property type="term" value="F:DNA-binding transcription factor activity"/>
    <property type="evidence" value="ECO:0000318"/>
    <property type="project" value="GO_Central"/>
</dbReference>
<dbReference type="GO" id="GO:0000981">
    <property type="term" value="F:DNA-binding transcription factor activity, RNA polymerase II-specific"/>
    <property type="evidence" value="ECO:0000303"/>
    <property type="project" value="UniProtKB"/>
</dbReference>
<dbReference type="GO" id="GO:0001227">
    <property type="term" value="F:DNA-binding transcription repressor activity, RNA polymerase II-specific"/>
    <property type="evidence" value="ECO:0000314"/>
    <property type="project" value="ARUK-UCL"/>
</dbReference>
<dbReference type="GO" id="GO:0000978">
    <property type="term" value="F:RNA polymerase II cis-regulatory region sequence-specific DNA binding"/>
    <property type="evidence" value="ECO:0000314"/>
    <property type="project" value="ARUK-UCL"/>
</dbReference>
<dbReference type="GO" id="GO:0000122">
    <property type="term" value="P:negative regulation of transcription by RNA polymerase II"/>
    <property type="evidence" value="ECO:0000314"/>
    <property type="project" value="ARUK-UCL"/>
</dbReference>
<dbReference type="GO" id="GO:0006355">
    <property type="term" value="P:regulation of DNA-templated transcription"/>
    <property type="evidence" value="ECO:0000303"/>
    <property type="project" value="UniProtKB"/>
</dbReference>
<dbReference type="GO" id="GO:0006366">
    <property type="term" value="P:transcription by RNA polymerase II"/>
    <property type="evidence" value="ECO:0007669"/>
    <property type="project" value="InterPro"/>
</dbReference>
<dbReference type="GO" id="GO:0014886">
    <property type="term" value="P:transition between slow and fast fiber"/>
    <property type="evidence" value="ECO:0007669"/>
    <property type="project" value="Ensembl"/>
</dbReference>
<dbReference type="FunFam" id="3.90.1460.10:FF:000002">
    <property type="entry name" value="General transcription factor II-I isoform 1"/>
    <property type="match status" value="1"/>
</dbReference>
<dbReference type="FunFam" id="3.90.1460.10:FF:000006">
    <property type="entry name" value="General transcription factor II-I repeat domain-containing protein 1"/>
    <property type="match status" value="1"/>
</dbReference>
<dbReference type="FunFam" id="3.90.1460.10:FF:000007">
    <property type="entry name" value="General transcription factor II-I repeat domain-containing protein 1"/>
    <property type="match status" value="1"/>
</dbReference>
<dbReference type="FunFam" id="3.90.1460.10:FF:000008">
    <property type="entry name" value="General transcription factor II-I repeat domain-containing protein 1"/>
    <property type="match status" value="1"/>
</dbReference>
<dbReference type="FunFam" id="3.90.1460.10:FF:000005">
    <property type="entry name" value="general transcription factor II-I repeat domain-containing protein 1"/>
    <property type="match status" value="1"/>
</dbReference>
<dbReference type="Gene3D" id="3.90.1460.10">
    <property type="entry name" value="GTF2I-like"/>
    <property type="match status" value="5"/>
</dbReference>
<dbReference type="InterPro" id="IPR004212">
    <property type="entry name" value="GTF2I"/>
</dbReference>
<dbReference type="InterPro" id="IPR036647">
    <property type="entry name" value="GTF2I-like_rpt_sf"/>
</dbReference>
<dbReference type="InterPro" id="IPR016659">
    <property type="entry name" value="TF_II-I"/>
</dbReference>
<dbReference type="PANTHER" id="PTHR46304">
    <property type="entry name" value="GENERAL TRANSCRIPTION FACTOR II-I REPEAT DOMAIN-CONTAINING PROTEIN 1"/>
    <property type="match status" value="1"/>
</dbReference>
<dbReference type="PANTHER" id="PTHR46304:SF1">
    <property type="entry name" value="GENERAL TRANSCRIPTION FACTOR II-I REPEAT DOMAIN-CONTAINING PROTEIN 1"/>
    <property type="match status" value="1"/>
</dbReference>
<dbReference type="Pfam" id="PF02946">
    <property type="entry name" value="GTF2I"/>
    <property type="match status" value="5"/>
</dbReference>
<dbReference type="PIRSF" id="PIRSF016441">
    <property type="entry name" value="TF_II-I"/>
    <property type="match status" value="1"/>
</dbReference>
<dbReference type="SUPFAM" id="SSF117773">
    <property type="entry name" value="GTF2I-like repeat"/>
    <property type="match status" value="5"/>
</dbReference>
<dbReference type="PROSITE" id="PS51139">
    <property type="entry name" value="GTF2I"/>
    <property type="match status" value="5"/>
</dbReference>
<sequence>MALLGKRCDVPTNGCGPDRWNSAFTRKDEIITSLVSALDSMCSALSKLNAEVACVAVHDESAFVVGTEKGRMFLNARKELQSDFLRFCRGPPWKDPEAEHPKKVQRGEGGGRSLPRSSLEHGSDVYLLRKMVEEVFDVLYSEALGRASVVPLPYERLLREPGLLAVQGLPEGLAFRRPAEYDPKALMAILEHSHRIRFKLKRPLEDGGRDSKALVELNGVSLIPKGSRDCGLHGQAPKVPPQDLPPTATSSSMASFLYSTALPNHAIRELKQEAPSCPLAPSDLGLSRPMPEPKATGAQDFSDCCGQKPTGPGGPLIQNVHASKRILFSIVHDKSEKWDAFIKETEDINTLRECVQILFNSRYAEALGLDHMVPVPYRKIACDPEAVEIVGIPDKIPFKRPCTYGVPKLKRILEERHSIHFIIKRMFDERIFTGNKFTKDTTKLEPASPPEDTSAEVSRATVLDLAGNARSDKGSMSEDCGPGTSGELGGLRPIKIEPEDLDIIQVTVPDPSPTSEEMTDSMPGHLPSEDSGYGMEMLTDKGLSEDARPEERPVEDSHGDVIRPLRKQVELLFNTRYAKAIGISEPVKVPYSKFLMHPEELFVVGLPEGISLRRPNCFGIAKLRKILEASNSIQFVIKRPELLTEGVKEPIMDSQGTASSLGFSPPALPPERDSGDPLVDESLKRQGFQENYDARLSRIDIANTLREQVQDLFNKKYGEALGIKYPVQVPYKRIKSNPGSVIIEGLPPGIPFRKPCTFGSQNLERILAVADKIKFTVTRPFQGLIPKPDEDDANRLGEKVILREQVKELFNEKYGEALGLNRPVLVPYKLIRDSPDAVEVTGLPDDIPFRNPNTYDIHRLEKILKAREHVRMVIINQLQPFAEICNDAKVPAKDSSIPKRKRKRVSEGNSVSSSSSSSSSSSSNPDSVASANQISLVQWPMYMVDYAGLNVQLPGPLNY</sequence>
<gene>
    <name type="primary">GTF2IRD1</name>
    <name type="synonym">CREAM1</name>
    <name type="synonym">GTF3</name>
    <name type="synonym">MUSTRD1</name>
    <name type="synonym">RBAP2</name>
    <name type="synonym">WBSCR11</name>
    <name type="synonym">WBSCR12</name>
</gene>